<sequence>MEPAIGICNLGGTAESRVVFEPVILTKEDIAEIFSDKKSKKFLSHIKFVDFDKMKGELILIDDGVVAVCRQRQENKVFVLVKIIGKEEDFLMAYEVEDSSYRIYLESSCSEISVSKFCRNSACWAVPVYILFPSL</sequence>
<gene>
    <name type="ordered locus">AF_2270</name>
</gene>
<keyword id="KW-1185">Reference proteome</keyword>
<dbReference type="EMBL" id="AE000782">
    <property type="protein sequence ID" value="AAB88996.1"/>
    <property type="molecule type" value="Genomic_DNA"/>
</dbReference>
<dbReference type="PIR" id="F69533">
    <property type="entry name" value="F69533"/>
</dbReference>
<dbReference type="RefSeq" id="WP_010879759.1">
    <property type="nucleotide sequence ID" value="NC_000917.1"/>
</dbReference>
<dbReference type="STRING" id="224325.AF_2270"/>
<dbReference type="PaxDb" id="224325-AF_2270"/>
<dbReference type="EnsemblBacteria" id="AAB88996">
    <property type="protein sequence ID" value="AAB88996"/>
    <property type="gene ID" value="AF_2270"/>
</dbReference>
<dbReference type="GeneID" id="1485502"/>
<dbReference type="KEGG" id="afu:AF_2270"/>
<dbReference type="HOGENOM" id="CLU_1880940_0_0_2"/>
<dbReference type="Proteomes" id="UP000002199">
    <property type="component" value="Chromosome"/>
</dbReference>
<name>Y2270_ARCFU</name>
<proteinExistence type="predicted"/>
<reference key="1">
    <citation type="journal article" date="1997" name="Nature">
        <title>The complete genome sequence of the hyperthermophilic, sulphate-reducing archaeon Archaeoglobus fulgidus.</title>
        <authorList>
            <person name="Klenk H.-P."/>
            <person name="Clayton R.A."/>
            <person name="Tomb J.-F."/>
            <person name="White O."/>
            <person name="Nelson K.E."/>
            <person name="Ketchum K.A."/>
            <person name="Dodson R.J."/>
            <person name="Gwinn M.L."/>
            <person name="Hickey E.K."/>
            <person name="Peterson J.D."/>
            <person name="Richardson D.L."/>
            <person name="Kerlavage A.R."/>
            <person name="Graham D.E."/>
            <person name="Kyrpides N.C."/>
            <person name="Fleischmann R.D."/>
            <person name="Quackenbush J."/>
            <person name="Lee N.H."/>
            <person name="Sutton G.G."/>
            <person name="Gill S.R."/>
            <person name="Kirkness E.F."/>
            <person name="Dougherty B.A."/>
            <person name="McKenney K."/>
            <person name="Adams M.D."/>
            <person name="Loftus B.J."/>
            <person name="Peterson S.N."/>
            <person name="Reich C.I."/>
            <person name="McNeil L.K."/>
            <person name="Badger J.H."/>
            <person name="Glodek A."/>
            <person name="Zhou L."/>
            <person name="Overbeek R."/>
            <person name="Gocayne J.D."/>
            <person name="Weidman J.F."/>
            <person name="McDonald L.A."/>
            <person name="Utterback T.R."/>
            <person name="Cotton M.D."/>
            <person name="Spriggs T."/>
            <person name="Artiach P."/>
            <person name="Kaine B.P."/>
            <person name="Sykes S.M."/>
            <person name="Sadow P.W."/>
            <person name="D'Andrea K.P."/>
            <person name="Bowman C."/>
            <person name="Fujii C."/>
            <person name="Garland S.A."/>
            <person name="Mason T.M."/>
            <person name="Olsen G.J."/>
            <person name="Fraser C.M."/>
            <person name="Smith H.O."/>
            <person name="Woese C.R."/>
            <person name="Venter J.C."/>
        </authorList>
    </citation>
    <scope>NUCLEOTIDE SEQUENCE [LARGE SCALE GENOMIC DNA]</scope>
    <source>
        <strain>ATCC 49558 / DSM 4304 / JCM 9628 / NBRC 100126 / VC-16</strain>
    </source>
</reference>
<feature type="chain" id="PRO_0000128131" description="Uncharacterized protein AF_2270">
    <location>
        <begin position="1"/>
        <end position="135"/>
    </location>
</feature>
<organism>
    <name type="scientific">Archaeoglobus fulgidus (strain ATCC 49558 / DSM 4304 / JCM 9628 / NBRC 100126 / VC-16)</name>
    <dbReference type="NCBI Taxonomy" id="224325"/>
    <lineage>
        <taxon>Archaea</taxon>
        <taxon>Methanobacteriati</taxon>
        <taxon>Methanobacteriota</taxon>
        <taxon>Archaeoglobi</taxon>
        <taxon>Archaeoglobales</taxon>
        <taxon>Archaeoglobaceae</taxon>
        <taxon>Archaeoglobus</taxon>
    </lineage>
</organism>
<protein>
    <recommendedName>
        <fullName>Uncharacterized protein AF_2270</fullName>
    </recommendedName>
</protein>
<accession>O28014</accession>